<sequence length="1466" mass="161686">MARLAAALWSLCVTTVLVTSATQGLSRAGLPFGLMRRELACEGYPIELRCPGSDVIMVENANYGRTDDKICDADPFQMENVQCYLPDAFKIMSQRCNNRTQCVVVAGSDAFPDPCPGTYKYLEVQYDCVPYIFVCPGTLQKVLEPTSTHESEHQSGAWCKDPLQAGDRIYVMPWIPYRTDTLTEYASWEDYVAARHTTTYRLPNRVDGTGFVVYDGAVFYNKERTRNIVKYDLRTRIKSGETVINTANYHDTSPYRWGGKTDIDLAVDENGLWVIYATEGNNGRLVVSQLNPYTLRFEGTWETGYDKRSASNAFMVCGVLYVLRSVYVDDDSEAAGNRVDYAFNTNANREEPVSLAFPNPYQFVSSVDYNPRDNQLYVWNNYFVVRYSLEFGPPDPSAGPATSPPLSTTTTARPTPLTSTASPAATTPLRRAPLTTHPVGAINQLGPDLPPATAPAPSTRRPPAPNLHVSPELFCEPREVRRVQWPATQQGMLVERPCPKGTRGIASFQCLPALGLWNPRGPDLSNCTSPWVNQVAQKIKSGENAANIASELARHTRGSIYAGDVSSSVKLMEQLLDILDAQLQALRPIERESAGKNYNKMHKRERTCKDYIKAVVETVDNLLRPEALESWKDMNATEQVHTATMLLDVLEEGAFLLADNVREPARFLAAKQNVVLEVTVLNTEGQVQELVFPQEYPSENSIQLSANTIKQNSRNGVVKVVFILYNNLGLFLSTENATVKLAGEAGTGGPGGASLVVNSQVIAASINKESSRVFLMDPVIFTVAHLEAKNHFNANCSFWNYSERSMLGYWSTQGCRLVESNKTHTTCACSHLTNFAVLMAHREIYQGRINELLLSVITWVGIVISLVCLAICISTFCFLRGLQTDRNTIHKNLCINLFLAELLFLVGIDKTQYEVACPIFAGLLHYFFLAAFSWLCLEGVHLYLLLVEVFESEYSRTKYYYLGGYCFPALVVGIAAAIDYRSYGTEKACWLRVDNYFIWSFIGPVSFVIVVNLVFLMVTLHKMIRSSSVLKPDSSRLDNIKSWALGAIALLFLLGLTWAFGLLFINKESVVMAYLFTTFNAFQGVFIFVFHCALQKKVHKEYSKCLRHSYCCIRSPPGGTHGSLKTSAMRSNTRYYTGTQSRIRRMWNDTVRKQTESSFMAGDINSTPTLNRGTMGNHLLTNPVLQPRGGTSPYNTLIAESVGFNPSSPPVFNSPGSYREPKHPLGGREACGMDTLPLNGNFNNSYSLRSGDFPPGDGGPEPPRGRNLADAAAFEKMIISELVHNNLRGASGGAKGPPPEPPVPPVPGVSEDEAGGPGSADRAEIELLYKALEEPLLLPRAQSVLYQSDLDESESCTAEDGATSRPLSSPPGRDSLYASGANLRDSPSYPDSSPEGPNEALPPPPPAPPGPPEIYYTSRPPALVARNPLQGYYQVRRPSHEGYLAAPSLEGPGPDGDGQMQLVTSL</sequence>
<keyword id="KW-0002">3D-structure</keyword>
<keyword id="KW-0025">Alternative splicing</keyword>
<keyword id="KW-1003">Cell membrane</keyword>
<keyword id="KW-0966">Cell projection</keyword>
<keyword id="KW-1015">Disulfide bond</keyword>
<keyword id="KW-0297">G-protein coupled receptor</keyword>
<keyword id="KW-0325">Glycoprotein</keyword>
<keyword id="KW-0430">Lectin</keyword>
<keyword id="KW-0472">Membrane</keyword>
<keyword id="KW-0488">Methylation</keyword>
<keyword id="KW-0597">Phosphoprotein</keyword>
<keyword id="KW-0675">Receptor</keyword>
<keyword id="KW-1185">Reference proteome</keyword>
<keyword id="KW-0732">Signal</keyword>
<keyword id="KW-0770">Synapse</keyword>
<keyword id="KW-0771">Synaptosome</keyword>
<keyword id="KW-0807">Transducer</keyword>
<keyword id="KW-0812">Transmembrane</keyword>
<keyword id="KW-1133">Transmembrane helix</keyword>
<reference key="1">
    <citation type="journal article" date="2005" name="Science">
        <title>The transcriptional landscape of the mammalian genome.</title>
        <authorList>
            <person name="Carninci P."/>
            <person name="Kasukawa T."/>
            <person name="Katayama S."/>
            <person name="Gough J."/>
            <person name="Frith M.C."/>
            <person name="Maeda N."/>
            <person name="Oyama R."/>
            <person name="Ravasi T."/>
            <person name="Lenhard B."/>
            <person name="Wells C."/>
            <person name="Kodzius R."/>
            <person name="Shimokawa K."/>
            <person name="Bajic V.B."/>
            <person name="Brenner S.E."/>
            <person name="Batalov S."/>
            <person name="Forrest A.R."/>
            <person name="Zavolan M."/>
            <person name="Davis M.J."/>
            <person name="Wilming L.G."/>
            <person name="Aidinis V."/>
            <person name="Allen J.E."/>
            <person name="Ambesi-Impiombato A."/>
            <person name="Apweiler R."/>
            <person name="Aturaliya R.N."/>
            <person name="Bailey T.L."/>
            <person name="Bansal M."/>
            <person name="Baxter L."/>
            <person name="Beisel K.W."/>
            <person name="Bersano T."/>
            <person name="Bono H."/>
            <person name="Chalk A.M."/>
            <person name="Chiu K.P."/>
            <person name="Choudhary V."/>
            <person name="Christoffels A."/>
            <person name="Clutterbuck D.R."/>
            <person name="Crowe M.L."/>
            <person name="Dalla E."/>
            <person name="Dalrymple B.P."/>
            <person name="de Bono B."/>
            <person name="Della Gatta G."/>
            <person name="di Bernardo D."/>
            <person name="Down T."/>
            <person name="Engstrom P."/>
            <person name="Fagiolini M."/>
            <person name="Faulkner G."/>
            <person name="Fletcher C.F."/>
            <person name="Fukushima T."/>
            <person name="Furuno M."/>
            <person name="Futaki S."/>
            <person name="Gariboldi M."/>
            <person name="Georgii-Hemming P."/>
            <person name="Gingeras T.R."/>
            <person name="Gojobori T."/>
            <person name="Green R.E."/>
            <person name="Gustincich S."/>
            <person name="Harbers M."/>
            <person name="Hayashi Y."/>
            <person name="Hensch T.K."/>
            <person name="Hirokawa N."/>
            <person name="Hill D."/>
            <person name="Huminiecki L."/>
            <person name="Iacono M."/>
            <person name="Ikeo K."/>
            <person name="Iwama A."/>
            <person name="Ishikawa T."/>
            <person name="Jakt M."/>
            <person name="Kanapin A."/>
            <person name="Katoh M."/>
            <person name="Kawasawa Y."/>
            <person name="Kelso J."/>
            <person name="Kitamura H."/>
            <person name="Kitano H."/>
            <person name="Kollias G."/>
            <person name="Krishnan S.P."/>
            <person name="Kruger A."/>
            <person name="Kummerfeld S.K."/>
            <person name="Kurochkin I.V."/>
            <person name="Lareau L.F."/>
            <person name="Lazarevic D."/>
            <person name="Lipovich L."/>
            <person name="Liu J."/>
            <person name="Liuni S."/>
            <person name="McWilliam S."/>
            <person name="Madan Babu M."/>
            <person name="Madera M."/>
            <person name="Marchionni L."/>
            <person name="Matsuda H."/>
            <person name="Matsuzawa S."/>
            <person name="Miki H."/>
            <person name="Mignone F."/>
            <person name="Miyake S."/>
            <person name="Morris K."/>
            <person name="Mottagui-Tabar S."/>
            <person name="Mulder N."/>
            <person name="Nakano N."/>
            <person name="Nakauchi H."/>
            <person name="Ng P."/>
            <person name="Nilsson R."/>
            <person name="Nishiguchi S."/>
            <person name="Nishikawa S."/>
            <person name="Nori F."/>
            <person name="Ohara O."/>
            <person name="Okazaki Y."/>
            <person name="Orlando V."/>
            <person name="Pang K.C."/>
            <person name="Pavan W.J."/>
            <person name="Pavesi G."/>
            <person name="Pesole G."/>
            <person name="Petrovsky N."/>
            <person name="Piazza S."/>
            <person name="Reed J."/>
            <person name="Reid J.F."/>
            <person name="Ring B.Z."/>
            <person name="Ringwald M."/>
            <person name="Rost B."/>
            <person name="Ruan Y."/>
            <person name="Salzberg S.L."/>
            <person name="Sandelin A."/>
            <person name="Schneider C."/>
            <person name="Schoenbach C."/>
            <person name="Sekiguchi K."/>
            <person name="Semple C.A."/>
            <person name="Seno S."/>
            <person name="Sessa L."/>
            <person name="Sheng Y."/>
            <person name="Shibata Y."/>
            <person name="Shimada H."/>
            <person name="Shimada K."/>
            <person name="Silva D."/>
            <person name="Sinclair B."/>
            <person name="Sperling S."/>
            <person name="Stupka E."/>
            <person name="Sugiura K."/>
            <person name="Sultana R."/>
            <person name="Takenaka Y."/>
            <person name="Taki K."/>
            <person name="Tammoja K."/>
            <person name="Tan S.L."/>
            <person name="Tang S."/>
            <person name="Taylor M.S."/>
            <person name="Tegner J."/>
            <person name="Teichmann S.A."/>
            <person name="Ueda H.R."/>
            <person name="van Nimwegen E."/>
            <person name="Verardo R."/>
            <person name="Wei C.L."/>
            <person name="Yagi K."/>
            <person name="Yamanishi H."/>
            <person name="Zabarovsky E."/>
            <person name="Zhu S."/>
            <person name="Zimmer A."/>
            <person name="Hide W."/>
            <person name="Bult C."/>
            <person name="Grimmond S.M."/>
            <person name="Teasdale R.D."/>
            <person name="Liu E.T."/>
            <person name="Brusic V."/>
            <person name="Quackenbush J."/>
            <person name="Wahlestedt C."/>
            <person name="Mattick J.S."/>
            <person name="Hume D.A."/>
            <person name="Kai C."/>
            <person name="Sasaki D."/>
            <person name="Tomaru Y."/>
            <person name="Fukuda S."/>
            <person name="Kanamori-Katayama M."/>
            <person name="Suzuki M."/>
            <person name="Aoki J."/>
            <person name="Arakawa T."/>
            <person name="Iida J."/>
            <person name="Imamura K."/>
            <person name="Itoh M."/>
            <person name="Kato T."/>
            <person name="Kawaji H."/>
            <person name="Kawagashira N."/>
            <person name="Kawashima T."/>
            <person name="Kojima M."/>
            <person name="Kondo S."/>
            <person name="Konno H."/>
            <person name="Nakano K."/>
            <person name="Ninomiya N."/>
            <person name="Nishio T."/>
            <person name="Okada M."/>
            <person name="Plessy C."/>
            <person name="Shibata K."/>
            <person name="Shiraki T."/>
            <person name="Suzuki S."/>
            <person name="Tagami M."/>
            <person name="Waki K."/>
            <person name="Watahiki A."/>
            <person name="Okamura-Oho Y."/>
            <person name="Suzuki H."/>
            <person name="Kawai J."/>
            <person name="Hayashizaki Y."/>
        </authorList>
    </citation>
    <scope>NUCLEOTIDE SEQUENCE [LARGE SCALE MRNA] (ISOFORM 2)</scope>
    <source>
        <strain>C57BL/6J</strain>
        <tissue>Brain</tissue>
    </source>
</reference>
<reference key="2">
    <citation type="journal article" date="2009" name="PLoS Biol.">
        <title>Lineage-specific biology revealed by a finished genome assembly of the mouse.</title>
        <authorList>
            <person name="Church D.M."/>
            <person name="Goodstadt L."/>
            <person name="Hillier L.W."/>
            <person name="Zody M.C."/>
            <person name="Goldstein S."/>
            <person name="She X."/>
            <person name="Bult C.J."/>
            <person name="Agarwala R."/>
            <person name="Cherry J.L."/>
            <person name="DiCuccio M."/>
            <person name="Hlavina W."/>
            <person name="Kapustin Y."/>
            <person name="Meric P."/>
            <person name="Maglott D."/>
            <person name="Birtle Z."/>
            <person name="Marques A.C."/>
            <person name="Graves T."/>
            <person name="Zhou S."/>
            <person name="Teague B."/>
            <person name="Potamousis K."/>
            <person name="Churas C."/>
            <person name="Place M."/>
            <person name="Herschleb J."/>
            <person name="Runnheim R."/>
            <person name="Forrest D."/>
            <person name="Amos-Landgraf J."/>
            <person name="Schwartz D.C."/>
            <person name="Cheng Z."/>
            <person name="Lindblad-Toh K."/>
            <person name="Eichler E.E."/>
            <person name="Ponting C.P."/>
        </authorList>
    </citation>
    <scope>NUCLEOTIDE SEQUENCE [LARGE SCALE GENOMIC DNA]</scope>
    <source>
        <strain>C57BL/6J</strain>
    </source>
</reference>
<reference key="3">
    <citation type="journal article" date="2003" name="DNA Res.">
        <title>Prediction of the coding sequences of mouse homologues of KIAA gene: II. The complete nucleotide sequences of 400 mouse KIAA-homologous cDNAs identified by screening of terminal sequences of cDNA clones randomly sampled from size-fractionated libraries.</title>
        <authorList>
            <person name="Okazaki N."/>
            <person name="Kikuno R."/>
            <person name="Ohara R."/>
            <person name="Inamoto S."/>
            <person name="Aizawa H."/>
            <person name="Yuasa S."/>
            <person name="Nakajima D."/>
            <person name="Nagase T."/>
            <person name="Ohara O."/>
            <person name="Koga H."/>
        </authorList>
    </citation>
    <scope>NUCLEOTIDE SEQUENCE [LARGE SCALE MRNA] OF 61-1466 (ISOFORM 1)</scope>
    <source>
        <tissue>Brain</tissue>
    </source>
</reference>
<reference key="4">
    <citation type="journal article" date="2003" name="Proc. Natl. Acad. Sci. U.S.A.">
        <title>The G protein-coupled receptor repertoires of human and mouse.</title>
        <authorList>
            <person name="Vassilatis D.K."/>
            <person name="Hohmann J.G."/>
            <person name="Zeng H."/>
            <person name="Li F."/>
            <person name="Ranchalis J.E."/>
            <person name="Mortrud M.T."/>
            <person name="Brown A."/>
            <person name="Rodriguez S.S."/>
            <person name="Weller J.R."/>
            <person name="Wright A.C."/>
            <person name="Bergmann J.E."/>
            <person name="Gaitanaris G.A."/>
        </authorList>
    </citation>
    <scope>NUCLEOTIDE SEQUENCE [LARGE SCALE MRNA] OF 814-978</scope>
</reference>
<reference key="5">
    <citation type="journal article" date="2004" name="Genome Res.">
        <title>The status, quality, and expansion of the NIH full-length cDNA project: the Mammalian Gene Collection (MGC).</title>
        <authorList>
            <consortium name="The MGC Project Team"/>
        </authorList>
    </citation>
    <scope>NUCLEOTIDE SEQUENCE [LARGE SCALE MRNA] OF 1145-1466</scope>
    <source>
        <strain>C57BL/6J</strain>
        <tissue>Brain</tissue>
    </source>
</reference>
<reference key="6">
    <citation type="journal article" date="2010" name="Cell">
        <title>A tissue-specific atlas of mouse protein phosphorylation and expression.</title>
        <authorList>
            <person name="Huttlin E.L."/>
            <person name="Jedrychowski M.P."/>
            <person name="Elias J.E."/>
            <person name="Goswami T."/>
            <person name="Rad R."/>
            <person name="Beausoleil S.A."/>
            <person name="Villen J."/>
            <person name="Haas W."/>
            <person name="Sowa M.E."/>
            <person name="Gygi S.P."/>
        </authorList>
    </citation>
    <scope>PHOSPHORYLATION [LARGE SCALE ANALYSIS] AT SER-1214; SER-1319; SER-1448 AND SER-1465</scope>
    <scope>IDENTIFICATION BY MASS SPECTROMETRY [LARGE SCALE ANALYSIS]</scope>
    <source>
        <tissue>Brain</tissue>
        <tissue>Lung</tissue>
        <tissue>Testis</tissue>
    </source>
</reference>
<reference key="7">
    <citation type="journal article" date="2012" name="Neuron">
        <title>FLRT proteins are endogenous latrophilin ligands and regulate excitatory synapse development.</title>
        <authorList>
            <person name="O'Sullivan M.L."/>
            <person name="de Wit J."/>
            <person name="Savas J.N."/>
            <person name="Comoletti D."/>
            <person name="Otto-Hitt S."/>
            <person name="Yates J.R. III"/>
            <person name="Ghosh A."/>
        </authorList>
    </citation>
    <scope>INTERACTION WITH FLRT1; FLRT2 AND FLRT3</scope>
</reference>
<reference key="8">
    <citation type="journal article" date="2014" name="Mol. Cell. Proteomics">
        <title>Immunoaffinity enrichment and mass spectrometry analysis of protein methylation.</title>
        <authorList>
            <person name="Guo A."/>
            <person name="Gu H."/>
            <person name="Zhou J."/>
            <person name="Mulhern D."/>
            <person name="Wang Y."/>
            <person name="Lee K.A."/>
            <person name="Yang V."/>
            <person name="Aguiar M."/>
            <person name="Kornhauser J."/>
            <person name="Jia X."/>
            <person name="Ren J."/>
            <person name="Beausoleil S.A."/>
            <person name="Silva J.C."/>
            <person name="Vemulapalli V."/>
            <person name="Bedford M.T."/>
            <person name="Comb M.J."/>
        </authorList>
    </citation>
    <scope>METHYLATION [LARGE SCALE ANALYSIS] AT ARG-1188</scope>
    <scope>IDENTIFICATION BY MASS SPECTROMETRY [LARGE SCALE ANALYSIS]</scope>
    <source>
        <tissue>Brain</tissue>
    </source>
</reference>
<reference key="9">
    <citation type="journal article" date="2008" name="Structure">
        <title>Solution structure and sugar-binding mechanism of mouse latrophilin-1 RBL: a 7TM receptor-attached lectin-like domain.</title>
        <authorList>
            <person name="Vakonakis I."/>
            <person name="Langenhan T."/>
            <person name="Promel S."/>
            <person name="Russ A."/>
            <person name="Campbell I.D."/>
        </authorList>
    </citation>
    <scope>STRUCTURE BY NMR OF 29-132 IN COMPLEX WITH D-GALACTOSE AND L-RHAMNOSE</scope>
    <scope>GLYCOSYLATION AT ASN-98</scope>
    <scope>MUTAGENESIS OF GLU-42 AND LYS-120</scope>
    <scope>DISULFIDE BONDS</scope>
</reference>
<reference key="10">
    <citation type="journal article" date="2022" name="Am. J. Hum. Genet.">
        <title>ADGRL1 haploinsufficiency causes a variable spectrum of neurodevelopmental disorders in humans and alters synaptic activity and behavior in a mouse model.</title>
        <authorList>
            <person name="Vitobello A."/>
            <person name="Mazel B."/>
            <person name="Lelianova V.G."/>
            <person name="Zangrandi A."/>
            <person name="Petitto E."/>
            <person name="Suckling J."/>
            <person name="Salpietro V."/>
            <person name="Meyer R."/>
            <person name="Elbracht M."/>
            <person name="Kurth I."/>
            <person name="Eggermann T."/>
            <person name="Benlaouer O."/>
            <person name="Lall G."/>
            <person name="Tonevitsky A.G."/>
            <person name="Scott D.A."/>
            <person name="Chan K.M."/>
            <person name="Rosenfeld J.A."/>
            <person name="Nambot S."/>
            <person name="Safraou H."/>
            <person name="Bruel A.L."/>
            <person name="Denomme-Pichon A.S."/>
            <person name="Tran Mau-Them F."/>
            <person name="Philippe C."/>
            <person name="Duffourd Y."/>
            <person name="Guo H."/>
            <person name="Petersen A.K."/>
            <person name="Granger L."/>
            <person name="Crunk A."/>
            <person name="Bayat A."/>
            <person name="Striano P."/>
            <person name="Zara F."/>
            <person name="Scala M."/>
            <person name="Thomas Q."/>
            <person name="Delahaye A."/>
            <person name="de Sainte Agathe J.M."/>
            <person name="Buratti J."/>
            <person name="Kozlov S.V."/>
            <person name="Faivre L."/>
            <person name="Thauvin-Robinet C."/>
            <person name="Ushkaryov Y."/>
        </authorList>
    </citation>
    <scope>DISRUPTION PHENOTYPE</scope>
    <scope>FUNCTION</scope>
</reference>
<proteinExistence type="evidence at protein level"/>
<comment type="function">
    <text evidence="2 10">Calcium-independent receptor of high affinity for alpha-latrotoxin, an excitatory neurotoxin present in black widow spider venom which triggers massive exocytosis from neurons and neuroendocrine cells (PubMed:35907405). Receptor for TENM2 that mediates heterophilic synaptic cell-cell contact and postsynaptic specialization. Receptor probably implicated in the regulation of exocytosis (By similarity).</text>
</comment>
<comment type="subunit">
    <text evidence="2 9">Forms a heterodimer, consisting of a large extracellular region (p120) non-covalently linked to a seven-transmembrane moiety (p85). Interacts with syntaxin and with proteins of the SHANK family via the PDZ domain (By similarity). Interacts (via extracellular domain) with FLRT1, FLRT2 and FLRT3 (via extracellular domain) (PubMed:22405201).</text>
</comment>
<comment type="interaction">
    <interactant intactId="EBI-770649">
        <id>Q80TR1</id>
    </interactant>
    <interactant intactId="EBI-6856929">
        <id>Q8K209</id>
        <label>Adgrg1</label>
    </interactant>
    <organismsDiffer>false</organismsDiffer>
    <experiments>2</experiments>
</comment>
<comment type="subcellular location">
    <subcellularLocation>
        <location>Cell membrane</location>
        <topology>Multi-pass membrane protein</topology>
    </subcellularLocation>
    <subcellularLocation>
        <location evidence="2">Cell projection</location>
        <location evidence="2">Axon</location>
    </subcellularLocation>
    <subcellularLocation>
        <location evidence="2">Cell projection</location>
        <location evidence="2">Growth cone</location>
    </subcellularLocation>
    <subcellularLocation>
        <location evidence="2">Synapse</location>
    </subcellularLocation>
    <subcellularLocation>
        <location evidence="2">Presynaptic cell membrane</location>
    </subcellularLocation>
    <subcellularLocation>
        <location evidence="2">Synapse</location>
        <location evidence="2">Synaptosome</location>
    </subcellularLocation>
    <text evidence="2">Colocalizes with TENM2 on the cell surface, across intercellular junctions and on nerve terminals near synaptic clefts.</text>
</comment>
<comment type="alternative products">
    <event type="alternative splicing"/>
    <isoform>
        <id>Q80TR1-1</id>
        <name>1</name>
        <sequence type="displayed"/>
    </isoform>
    <isoform>
        <id>Q80TR1-2</id>
        <name>2</name>
        <sequence type="described" ref="VSP_022137"/>
    </isoform>
</comment>
<comment type="domain">
    <text evidence="1">The extracellular domain coupled to the a single transmembrane region are sufficient for full responsiveness to alpha-latrotoxin.</text>
</comment>
<comment type="PTM">
    <text evidence="2">Autoproteolytically cleaved into 2 subunits, an extracellular subunit and a seven-transmembrane subunit. This proteolytic processing takes place early in the biosynthetic pathway, either in the endoplasmic reticulum or in the early compartment of the Golgi apparatus.</text>
</comment>
<comment type="disruption phenotype">
    <text evidence="10">Knockout animals are born at sub-Mendelian ratios. ADGRL1-null mice who survive to adulthood demonstrate stereotypic behaviors, sexual dysfunction, bimodal extremes of locomotion, augmented startle reflex, and attenuated pre-pulse inhibition, which respond to risperidone. Ex vivo synaptic preparations display increased spontaneous exocytosis of dopamine, acetylcholine, and glutamate, although ADGRL1-deficient neurons poorly form synapses in vitro.</text>
</comment>
<comment type="similarity">
    <text evidence="12">Belongs to the G-protein coupled receptor 2 family. Adhesion G-protein coupled receptor (ADGR) subfamily.</text>
</comment>
<dbReference type="EMBL" id="AK147519">
    <property type="protein sequence ID" value="BAE27967.1"/>
    <property type="molecule type" value="mRNA"/>
</dbReference>
<dbReference type="EMBL" id="AK122380">
    <property type="protein sequence ID" value="BAC65662.1"/>
    <property type="molecule type" value="mRNA"/>
</dbReference>
<dbReference type="EMBL" id="AC156028">
    <property type="status" value="NOT_ANNOTATED_CDS"/>
    <property type="molecule type" value="Genomic_DNA"/>
</dbReference>
<dbReference type="EMBL" id="AY255594">
    <property type="protein sequence ID" value="AAO85106.1"/>
    <property type="molecule type" value="mRNA"/>
</dbReference>
<dbReference type="EMBL" id="BC055793">
    <property type="protein sequence ID" value="AAH55793.1"/>
    <property type="molecule type" value="mRNA"/>
</dbReference>
<dbReference type="CCDS" id="CCDS52613.1">
    <molecule id="Q80TR1-1"/>
</dbReference>
<dbReference type="RefSeq" id="NP_851382.2">
    <molecule id="Q80TR1-1"/>
    <property type="nucleotide sequence ID" value="NM_181039.2"/>
</dbReference>
<dbReference type="RefSeq" id="XP_006531189.1">
    <property type="nucleotide sequence ID" value="XM_006531126.2"/>
</dbReference>
<dbReference type="RefSeq" id="XP_006531190.1">
    <molecule id="Q80TR1-2"/>
    <property type="nucleotide sequence ID" value="XM_006531127.3"/>
</dbReference>
<dbReference type="RefSeq" id="XP_006531191.1">
    <molecule id="Q80TR1-2"/>
    <property type="nucleotide sequence ID" value="XM_006531128.3"/>
</dbReference>
<dbReference type="RefSeq" id="XP_030099486.1">
    <molecule id="Q80TR1-1"/>
    <property type="nucleotide sequence ID" value="XM_030243626.2"/>
</dbReference>
<dbReference type="RefSeq" id="XP_036010013.1">
    <molecule id="Q80TR1-2"/>
    <property type="nucleotide sequence ID" value="XM_036154120.1"/>
</dbReference>
<dbReference type="RefSeq" id="XP_036010014.1">
    <molecule id="Q80TR1-2"/>
    <property type="nucleotide sequence ID" value="XM_036154121.1"/>
</dbReference>
<dbReference type="RefSeq" id="XP_036010015.1">
    <molecule id="Q80TR1-2"/>
    <property type="nucleotide sequence ID" value="XM_036154122.1"/>
</dbReference>
<dbReference type="RefSeq" id="XP_036010016.1">
    <molecule id="Q80TR1-2"/>
    <property type="nucleotide sequence ID" value="XM_036154123.1"/>
</dbReference>
<dbReference type="RefSeq" id="XP_036010017.1">
    <molecule id="Q80TR1-2"/>
    <property type="nucleotide sequence ID" value="XM_036154124.1"/>
</dbReference>
<dbReference type="RefSeq" id="XP_036010018.1">
    <molecule id="Q80TR1-2"/>
    <property type="nucleotide sequence ID" value="XM_036154125.1"/>
</dbReference>
<dbReference type="RefSeq" id="XP_036010019.1">
    <molecule id="Q80TR1-2"/>
    <property type="nucleotide sequence ID" value="XM_036154126.1"/>
</dbReference>
<dbReference type="PDB" id="2JX9">
    <property type="method" value="NMR"/>
    <property type="chains" value="A=29-131"/>
</dbReference>
<dbReference type="PDB" id="2JXA">
    <property type="method" value="NMR"/>
    <property type="chains" value="A=29-131"/>
</dbReference>
<dbReference type="PDB" id="6SKA">
    <property type="method" value="X-ray"/>
    <property type="resolution" value="3.86 A"/>
    <property type="chains" value="D=35-391"/>
</dbReference>
<dbReference type="PDBsum" id="2JX9"/>
<dbReference type="PDBsum" id="2JXA"/>
<dbReference type="PDBsum" id="6SKA"/>
<dbReference type="BMRB" id="Q80TR1"/>
<dbReference type="SMR" id="Q80TR1"/>
<dbReference type="BioGRID" id="237029">
    <property type="interactions" value="14"/>
</dbReference>
<dbReference type="FunCoup" id="Q80TR1">
    <property type="interactions" value="796"/>
</dbReference>
<dbReference type="IntAct" id="Q80TR1">
    <property type="interactions" value="3"/>
</dbReference>
<dbReference type="MINT" id="Q80TR1"/>
<dbReference type="STRING" id="10090.ENSMUSP00000118452"/>
<dbReference type="MEROPS" id="P02.010"/>
<dbReference type="UniLectin" id="Q80TR1"/>
<dbReference type="GlyConnect" id="2111">
    <property type="glycosylation" value="4 N-Linked glycans (2 sites)"/>
</dbReference>
<dbReference type="GlyCosmos" id="Q80TR1">
    <property type="glycosylation" value="7 sites, 4 glycans"/>
</dbReference>
<dbReference type="GlyGen" id="Q80TR1">
    <property type="glycosylation" value="9 sites, 8 N-linked glycans (5 sites), 1 O-linked glycan (1 site)"/>
</dbReference>
<dbReference type="iPTMnet" id="Q80TR1"/>
<dbReference type="PhosphoSitePlus" id="Q80TR1"/>
<dbReference type="SwissPalm" id="Q80TR1"/>
<dbReference type="PaxDb" id="10090-ENSMUSP00000118452"/>
<dbReference type="PeptideAtlas" id="Q80TR1"/>
<dbReference type="ProteomicsDB" id="282041">
    <molecule id="Q80TR1-1"/>
</dbReference>
<dbReference type="ProteomicsDB" id="282042">
    <molecule id="Q80TR1-2"/>
</dbReference>
<dbReference type="Pumba" id="Q80TR1"/>
<dbReference type="Antibodypedia" id="13625">
    <property type="antibodies" value="147 antibodies from 28 providers"/>
</dbReference>
<dbReference type="Ensembl" id="ENSMUST00000131717.2">
    <molecule id="Q80TR1-2"/>
    <property type="protein sequence ID" value="ENSMUSP00000118579.2"/>
    <property type="gene ID" value="ENSMUSG00000013033.17"/>
</dbReference>
<dbReference type="Ensembl" id="ENSMUST00000141158.8">
    <molecule id="Q80TR1-1"/>
    <property type="protein sequence ID" value="ENSMUSP00000118452.2"/>
    <property type="gene ID" value="ENSMUSG00000013033.17"/>
</dbReference>
<dbReference type="GeneID" id="330814"/>
<dbReference type="KEGG" id="mmu:330814"/>
<dbReference type="UCSC" id="uc009mlh.2">
    <molecule id="Q80TR1-1"/>
    <property type="organism name" value="mouse"/>
</dbReference>
<dbReference type="AGR" id="MGI:1929461"/>
<dbReference type="CTD" id="22859"/>
<dbReference type="MGI" id="MGI:1929461">
    <property type="gene designation" value="Adgrl1"/>
</dbReference>
<dbReference type="VEuPathDB" id="HostDB:ENSMUSG00000013033"/>
<dbReference type="eggNOG" id="KOG3545">
    <property type="taxonomic scope" value="Eukaryota"/>
</dbReference>
<dbReference type="eggNOG" id="KOG4193">
    <property type="taxonomic scope" value="Eukaryota"/>
</dbReference>
<dbReference type="eggNOG" id="KOG4729">
    <property type="taxonomic scope" value="Eukaryota"/>
</dbReference>
<dbReference type="GeneTree" id="ENSGT00940000159684"/>
<dbReference type="InParanoid" id="Q80TR1"/>
<dbReference type="OMA" id="SPPWARV"/>
<dbReference type="PhylomeDB" id="Q80TR1"/>
<dbReference type="TreeFam" id="TF351999"/>
<dbReference type="BioGRID-ORCS" id="330814">
    <property type="hits" value="5 hits in 77 CRISPR screens"/>
</dbReference>
<dbReference type="CD-CODE" id="CE726F99">
    <property type="entry name" value="Postsynaptic density"/>
</dbReference>
<dbReference type="ChiTaRS" id="Adgrl1">
    <property type="organism name" value="mouse"/>
</dbReference>
<dbReference type="EvolutionaryTrace" id="Q80TR1"/>
<dbReference type="PRO" id="PR:Q80TR1"/>
<dbReference type="Proteomes" id="UP000000589">
    <property type="component" value="Chromosome 8"/>
</dbReference>
<dbReference type="RNAct" id="Q80TR1">
    <property type="molecule type" value="protein"/>
</dbReference>
<dbReference type="Bgee" id="ENSMUSG00000013033">
    <property type="expression patterns" value="Expressed in CA3 field of hippocampus and 243 other cell types or tissues"/>
</dbReference>
<dbReference type="ExpressionAtlas" id="Q80TR1">
    <property type="expression patterns" value="baseline and differential"/>
</dbReference>
<dbReference type="GO" id="GO:0030424">
    <property type="term" value="C:axon"/>
    <property type="evidence" value="ECO:0000250"/>
    <property type="project" value="UniProtKB"/>
</dbReference>
<dbReference type="GO" id="GO:0030426">
    <property type="term" value="C:growth cone"/>
    <property type="evidence" value="ECO:0000250"/>
    <property type="project" value="UniProtKB"/>
</dbReference>
<dbReference type="GO" id="GO:0043005">
    <property type="term" value="C:neuron projection"/>
    <property type="evidence" value="ECO:0000250"/>
    <property type="project" value="UniProtKB"/>
</dbReference>
<dbReference type="GO" id="GO:0005886">
    <property type="term" value="C:plasma membrane"/>
    <property type="evidence" value="ECO:0000250"/>
    <property type="project" value="UniProtKB"/>
</dbReference>
<dbReference type="GO" id="GO:0042734">
    <property type="term" value="C:presynaptic membrane"/>
    <property type="evidence" value="ECO:0000250"/>
    <property type="project" value="UniProtKB"/>
</dbReference>
<dbReference type="GO" id="GO:0045202">
    <property type="term" value="C:synapse"/>
    <property type="evidence" value="ECO:0000250"/>
    <property type="project" value="UniProtKB"/>
</dbReference>
<dbReference type="GO" id="GO:0030246">
    <property type="term" value="F:carbohydrate binding"/>
    <property type="evidence" value="ECO:0007669"/>
    <property type="project" value="UniProtKB-KW"/>
</dbReference>
<dbReference type="GO" id="GO:0050839">
    <property type="term" value="F:cell adhesion molecule binding"/>
    <property type="evidence" value="ECO:0000250"/>
    <property type="project" value="UniProtKB"/>
</dbReference>
<dbReference type="GO" id="GO:0004930">
    <property type="term" value="F:G protein-coupled receptor activity"/>
    <property type="evidence" value="ECO:0007669"/>
    <property type="project" value="UniProtKB-KW"/>
</dbReference>
<dbReference type="GO" id="GO:0016524">
    <property type="term" value="F:latrotoxin receptor activity"/>
    <property type="evidence" value="ECO:0000250"/>
    <property type="project" value="UniProtKB"/>
</dbReference>
<dbReference type="GO" id="GO:0007166">
    <property type="term" value="P:cell surface receptor signaling pathway"/>
    <property type="evidence" value="ECO:0007669"/>
    <property type="project" value="InterPro"/>
</dbReference>
<dbReference type="GO" id="GO:0051965">
    <property type="term" value="P:positive regulation of synapse assembly"/>
    <property type="evidence" value="ECO:0000314"/>
    <property type="project" value="MGI"/>
</dbReference>
<dbReference type="CDD" id="cd16007">
    <property type="entry name" value="7tmB2_Latrophilin-1"/>
    <property type="match status" value="1"/>
</dbReference>
<dbReference type="CDD" id="cd22844">
    <property type="entry name" value="Gal_Rha_Lectin_LPHN1"/>
    <property type="match status" value="1"/>
</dbReference>
<dbReference type="FunFam" id="1.20.1070.10:FF:000011">
    <property type="entry name" value="Adhesion G protein-coupled receptor L2"/>
    <property type="match status" value="1"/>
</dbReference>
<dbReference type="FunFam" id="1.25.40.610:FF:000001">
    <property type="entry name" value="Adhesion G protein-coupled receptor L2"/>
    <property type="match status" value="1"/>
</dbReference>
<dbReference type="FunFam" id="2.60.120.740:FF:000001">
    <property type="entry name" value="Adhesion G protein-coupled receptor L2"/>
    <property type="match status" value="1"/>
</dbReference>
<dbReference type="FunFam" id="2.60.220.50:FF:000001">
    <property type="entry name" value="Adhesion G protein-coupled receptor L2"/>
    <property type="match status" value="1"/>
</dbReference>
<dbReference type="FunFam" id="4.10.1240.10:FF:000001">
    <property type="entry name" value="Adhesion G protein-coupled receptor L2"/>
    <property type="match status" value="1"/>
</dbReference>
<dbReference type="Gene3D" id="1.25.40.610">
    <property type="match status" value="1"/>
</dbReference>
<dbReference type="Gene3D" id="2.60.120.740">
    <property type="match status" value="1"/>
</dbReference>
<dbReference type="Gene3D" id="2.60.220.50">
    <property type="match status" value="1"/>
</dbReference>
<dbReference type="Gene3D" id="4.10.1240.10">
    <property type="entry name" value="GPCR, family 2, extracellular hormone receptor domain"/>
    <property type="match status" value="1"/>
</dbReference>
<dbReference type="Gene3D" id="1.20.1070.10">
    <property type="entry name" value="Rhodopsin 7-helix transmembrane proteins"/>
    <property type="match status" value="1"/>
</dbReference>
<dbReference type="InterPro" id="IPR057244">
    <property type="entry name" value="GAIN_B"/>
</dbReference>
<dbReference type="InterPro" id="IPR032471">
    <property type="entry name" value="GAIN_dom_N"/>
</dbReference>
<dbReference type="InterPro" id="IPR046338">
    <property type="entry name" value="GAIN_dom_sf"/>
</dbReference>
<dbReference type="InterPro" id="IPR017981">
    <property type="entry name" value="GPCR_2-like_7TM"/>
</dbReference>
<dbReference type="InterPro" id="IPR036445">
    <property type="entry name" value="GPCR_2_extracell_dom_sf"/>
</dbReference>
<dbReference type="InterPro" id="IPR001879">
    <property type="entry name" value="GPCR_2_extracellular_dom"/>
</dbReference>
<dbReference type="InterPro" id="IPR003924">
    <property type="entry name" value="GPCR_2_latrophilin"/>
</dbReference>
<dbReference type="InterPro" id="IPR003334">
    <property type="entry name" value="GPCR_2_latrophilin_rcpt_C"/>
</dbReference>
<dbReference type="InterPro" id="IPR000832">
    <property type="entry name" value="GPCR_2_secretin-like"/>
</dbReference>
<dbReference type="InterPro" id="IPR017983">
    <property type="entry name" value="GPCR_2_secretin-like_CS"/>
</dbReference>
<dbReference type="InterPro" id="IPR000203">
    <property type="entry name" value="GPS"/>
</dbReference>
<dbReference type="InterPro" id="IPR031234">
    <property type="entry name" value="Latrophilin-1_TM"/>
</dbReference>
<dbReference type="InterPro" id="IPR000922">
    <property type="entry name" value="Lectin_gal-bd_dom"/>
</dbReference>
<dbReference type="InterPro" id="IPR043159">
    <property type="entry name" value="Lectin_gal-bd_sf"/>
</dbReference>
<dbReference type="InterPro" id="IPR003112">
    <property type="entry name" value="Olfac-like_dom"/>
</dbReference>
<dbReference type="PANTHER" id="PTHR12011:SF62">
    <property type="entry name" value="ADHESION G PROTEIN-COUPLED RECEPTOR L1"/>
    <property type="match status" value="1"/>
</dbReference>
<dbReference type="PANTHER" id="PTHR12011">
    <property type="entry name" value="ADHESION G-PROTEIN COUPLED RECEPTOR"/>
    <property type="match status" value="1"/>
</dbReference>
<dbReference type="Pfam" id="PF00002">
    <property type="entry name" value="7tm_2"/>
    <property type="match status" value="1"/>
</dbReference>
<dbReference type="Pfam" id="PF16489">
    <property type="entry name" value="GAIN"/>
    <property type="match status" value="1"/>
</dbReference>
<dbReference type="Pfam" id="PF01825">
    <property type="entry name" value="GPS"/>
    <property type="match status" value="1"/>
</dbReference>
<dbReference type="Pfam" id="PF02793">
    <property type="entry name" value="HRM"/>
    <property type="match status" value="1"/>
</dbReference>
<dbReference type="Pfam" id="PF02354">
    <property type="entry name" value="Latrophilin"/>
    <property type="match status" value="1"/>
</dbReference>
<dbReference type="Pfam" id="PF02191">
    <property type="entry name" value="OLF"/>
    <property type="match status" value="1"/>
</dbReference>
<dbReference type="Pfam" id="PF02140">
    <property type="entry name" value="SUEL_Lectin"/>
    <property type="match status" value="1"/>
</dbReference>
<dbReference type="PRINTS" id="PR00249">
    <property type="entry name" value="GPCRSECRETIN"/>
</dbReference>
<dbReference type="PRINTS" id="PR01444">
    <property type="entry name" value="LATROPHILIN"/>
</dbReference>
<dbReference type="SMART" id="SM00303">
    <property type="entry name" value="GPS"/>
    <property type="match status" value="1"/>
</dbReference>
<dbReference type="SMART" id="SM00008">
    <property type="entry name" value="HormR"/>
    <property type="match status" value="1"/>
</dbReference>
<dbReference type="SMART" id="SM00284">
    <property type="entry name" value="OLF"/>
    <property type="match status" value="1"/>
</dbReference>
<dbReference type="SUPFAM" id="SSF81321">
    <property type="entry name" value="Family A G protein-coupled receptor-like"/>
    <property type="match status" value="1"/>
</dbReference>
<dbReference type="PROSITE" id="PS00650">
    <property type="entry name" value="G_PROTEIN_RECEP_F2_2"/>
    <property type="match status" value="1"/>
</dbReference>
<dbReference type="PROSITE" id="PS50227">
    <property type="entry name" value="G_PROTEIN_RECEP_F2_3"/>
    <property type="match status" value="1"/>
</dbReference>
<dbReference type="PROSITE" id="PS50261">
    <property type="entry name" value="G_PROTEIN_RECEP_F2_4"/>
    <property type="match status" value="1"/>
</dbReference>
<dbReference type="PROSITE" id="PS50221">
    <property type="entry name" value="GAIN_B"/>
    <property type="match status" value="1"/>
</dbReference>
<dbReference type="PROSITE" id="PS51132">
    <property type="entry name" value="OLF"/>
    <property type="match status" value="1"/>
</dbReference>
<dbReference type="PROSITE" id="PS50228">
    <property type="entry name" value="SUEL_LECTIN"/>
    <property type="match status" value="1"/>
</dbReference>
<feature type="signal peptide" evidence="3">
    <location>
        <begin position="1"/>
        <end position="28"/>
    </location>
</feature>
<feature type="chain" id="PRO_0000070342" description="Adhesion G protein-coupled receptor L1">
    <location>
        <begin position="29"/>
        <end position="1466"/>
    </location>
</feature>
<feature type="topological domain" description="Extracellular" evidence="3">
    <location>
        <begin position="29"/>
        <end position="852"/>
    </location>
</feature>
<feature type="transmembrane region" description="Helical; Name=1" evidence="3">
    <location>
        <begin position="853"/>
        <end position="873"/>
    </location>
</feature>
<feature type="topological domain" description="Cytoplasmic" evidence="3">
    <location>
        <begin position="874"/>
        <end position="887"/>
    </location>
</feature>
<feature type="transmembrane region" description="Helical; Name=2" evidence="3">
    <location>
        <begin position="888"/>
        <end position="908"/>
    </location>
</feature>
<feature type="topological domain" description="Extracellular" evidence="3">
    <location>
        <begin position="909"/>
        <end position="914"/>
    </location>
</feature>
<feature type="transmembrane region" description="Helical; Name=3" evidence="3">
    <location>
        <begin position="915"/>
        <end position="935"/>
    </location>
</feature>
<feature type="topological domain" description="Cytoplasmic" evidence="3">
    <location>
        <begin position="936"/>
        <end position="958"/>
    </location>
</feature>
<feature type="transmembrane region" description="Helical; Name=4" evidence="3">
    <location>
        <begin position="959"/>
        <end position="979"/>
    </location>
</feature>
<feature type="topological domain" description="Extracellular" evidence="3">
    <location>
        <begin position="980"/>
        <end position="996"/>
    </location>
</feature>
<feature type="transmembrane region" description="Helical; Name=5" evidence="3">
    <location>
        <begin position="997"/>
        <end position="1017"/>
    </location>
</feature>
<feature type="topological domain" description="Cytoplasmic" evidence="3">
    <location>
        <begin position="1018"/>
        <end position="1044"/>
    </location>
</feature>
<feature type="transmembrane region" description="Helical; Name=6" evidence="3">
    <location>
        <begin position="1045"/>
        <end position="1065"/>
    </location>
</feature>
<feature type="topological domain" description="Extracellular" evidence="3">
    <location>
        <begin position="1066"/>
        <end position="1069"/>
    </location>
</feature>
<feature type="transmembrane region" description="Helical; Name=7" evidence="3">
    <location>
        <begin position="1070"/>
        <end position="1090"/>
    </location>
</feature>
<feature type="topological domain" description="Cytoplasmic" evidence="3">
    <location>
        <begin position="1091"/>
        <end position="1466"/>
    </location>
</feature>
<feature type="domain" description="SUEL-type lectin" evidence="5">
    <location>
        <begin position="40"/>
        <end position="129"/>
    </location>
</feature>
<feature type="domain" description="Olfactomedin-like" evidence="6">
    <location>
        <begin position="134"/>
        <end position="393"/>
    </location>
</feature>
<feature type="domain" description="GAIN-B" evidence="4">
    <location>
        <begin position="664"/>
        <end position="845"/>
    </location>
</feature>
<feature type="region of interest" description="Disordered" evidence="7">
    <location>
        <begin position="395"/>
        <end position="463"/>
    </location>
</feature>
<feature type="region of interest" description="GPS" evidence="4">
    <location>
        <begin position="796"/>
        <end position="845"/>
    </location>
</feature>
<feature type="region of interest" description="Disordered" evidence="7">
    <location>
        <begin position="1242"/>
        <end position="1267"/>
    </location>
</feature>
<feature type="region of interest" description="Disordered" evidence="7">
    <location>
        <begin position="1288"/>
        <end position="1319"/>
    </location>
</feature>
<feature type="region of interest" description="Disordered" evidence="7">
    <location>
        <begin position="1352"/>
        <end position="1421"/>
    </location>
</feature>
<feature type="region of interest" description="Disordered" evidence="7">
    <location>
        <begin position="1443"/>
        <end position="1466"/>
    </location>
</feature>
<feature type="compositionally biased region" description="Low complexity" evidence="7">
    <location>
        <begin position="400"/>
        <end position="436"/>
    </location>
</feature>
<feature type="compositionally biased region" description="Pro residues" evidence="7">
    <location>
        <begin position="448"/>
        <end position="463"/>
    </location>
</feature>
<feature type="compositionally biased region" description="Pro residues" evidence="7">
    <location>
        <begin position="1296"/>
        <end position="1307"/>
    </location>
</feature>
<feature type="compositionally biased region" description="Pro residues" evidence="7">
    <location>
        <begin position="1400"/>
        <end position="1412"/>
    </location>
</feature>
<feature type="binding site" evidence="14">
    <location>
        <position position="42"/>
    </location>
    <ligand>
        <name>alpha-L-rhamnose</name>
        <dbReference type="ChEBI" id="CHEBI:27907"/>
    </ligand>
</feature>
<feature type="binding site" evidence="14">
    <location>
        <begin position="117"/>
        <end position="120"/>
    </location>
    <ligand>
        <name>alpha-L-rhamnose</name>
        <dbReference type="ChEBI" id="CHEBI:27907"/>
    </ligand>
</feature>
<feature type="site" description="Cleavage; by autolysis" evidence="4">
    <location>
        <begin position="832"/>
        <end position="833"/>
    </location>
</feature>
<feature type="modified residue" description="Omega-N-methylarginine" evidence="16">
    <location>
        <position position="1188"/>
    </location>
</feature>
<feature type="modified residue" description="Phosphoserine" evidence="15">
    <location>
        <position position="1214"/>
    </location>
</feature>
<feature type="modified residue" description="Phosphoserine" evidence="15">
    <location>
        <position position="1319"/>
    </location>
</feature>
<feature type="modified residue" description="Phosphoserine" evidence="15">
    <location>
        <position position="1448"/>
    </location>
</feature>
<feature type="modified residue" description="Phosphoserine" evidence="15">
    <location>
        <position position="1465"/>
    </location>
</feature>
<feature type="glycosylation site" description="N-linked (GlcNAc...) asparagine" evidence="8">
    <location>
        <position position="98"/>
    </location>
</feature>
<feature type="glycosylation site" description="N-linked (GlcNAc...) asparagine" evidence="3">
    <location>
        <position position="526"/>
    </location>
</feature>
<feature type="glycosylation site" description="N-linked (GlcNAc...) asparagine" evidence="3">
    <location>
        <position position="635"/>
    </location>
</feature>
<feature type="glycosylation site" description="N-linked (GlcNAc...) asparagine" evidence="3">
    <location>
        <position position="736"/>
    </location>
</feature>
<feature type="glycosylation site" description="N-linked (GlcNAc...) asparagine" evidence="3">
    <location>
        <position position="795"/>
    </location>
</feature>
<feature type="glycosylation site" description="N-linked (GlcNAc...) asparagine" evidence="3">
    <location>
        <position position="800"/>
    </location>
</feature>
<feature type="glycosylation site" description="N-linked (GlcNAc...) asparagine" evidence="3">
    <location>
        <position position="821"/>
    </location>
</feature>
<feature type="disulfide bond" evidence="6 8">
    <location>
        <begin position="41"/>
        <end position="71"/>
    </location>
</feature>
<feature type="disulfide bond" evidence="6 8">
    <location>
        <begin position="50"/>
        <end position="128"/>
    </location>
</feature>
<feature type="disulfide bond" evidence="6 8">
    <location>
        <begin position="83"/>
        <end position="115"/>
    </location>
</feature>
<feature type="disulfide bond" evidence="6 8">
    <location>
        <begin position="96"/>
        <end position="102"/>
    </location>
</feature>
<feature type="disulfide bond" evidence="6">
    <location>
        <begin position="135"/>
        <end position="317"/>
    </location>
</feature>
<feature type="disulfide bond" evidence="6">
    <location>
        <begin position="475"/>
        <end position="510"/>
    </location>
</feature>
<feature type="disulfide bond" evidence="6">
    <location>
        <begin position="498"/>
        <end position="527"/>
    </location>
</feature>
<feature type="disulfide bond" evidence="4">
    <location>
        <begin position="796"/>
        <end position="827"/>
    </location>
</feature>
<feature type="disulfide bond" evidence="4">
    <location>
        <begin position="815"/>
        <end position="829"/>
    </location>
</feature>
<feature type="splice variant" id="VSP_022137" description="In isoform 2." evidence="11">
    <location>
        <begin position="1"/>
        <end position="171"/>
    </location>
</feature>
<feature type="mutagenesis site" description="Abrogates L-rhamnose binding." evidence="8">
    <original>E</original>
    <variation>A</variation>
    <variation>R</variation>
    <location>
        <position position="42"/>
    </location>
</feature>
<feature type="mutagenesis site" description="100-fold decreased affinity for L-rhamnose." evidence="8">
    <original>E</original>
    <variation>D</variation>
    <variation>Q</variation>
    <location>
        <position position="42"/>
    </location>
</feature>
<feature type="mutagenesis site" description="Abrogates L-rhamnose binding." evidence="8">
    <original>K</original>
    <variation>A</variation>
    <variation>R</variation>
    <location>
        <position position="120"/>
    </location>
</feature>
<feature type="strand" evidence="17">
    <location>
        <begin position="36"/>
        <end position="41"/>
    </location>
</feature>
<feature type="strand" evidence="17">
    <location>
        <begin position="44"/>
        <end position="49"/>
    </location>
</feature>
<feature type="strand" evidence="17">
    <location>
        <begin position="54"/>
        <end position="66"/>
    </location>
</feature>
<feature type="strand" evidence="17">
    <location>
        <begin position="68"/>
        <end position="71"/>
    </location>
</feature>
<feature type="helix" evidence="17">
    <location>
        <begin position="75"/>
        <end position="78"/>
    </location>
</feature>
<feature type="helix" evidence="17">
    <location>
        <begin position="87"/>
        <end position="96"/>
    </location>
</feature>
<feature type="strand" evidence="17">
    <location>
        <begin position="99"/>
        <end position="107"/>
    </location>
</feature>
<feature type="helix" evidence="17">
    <location>
        <begin position="108"/>
        <end position="110"/>
    </location>
</feature>
<feature type="strand" evidence="17">
    <location>
        <begin position="121"/>
        <end position="131"/>
    </location>
</feature>
<evidence type="ECO:0000250" key="1"/>
<evidence type="ECO:0000250" key="2">
    <source>
        <dbReference type="UniProtKB" id="O88917"/>
    </source>
</evidence>
<evidence type="ECO:0000255" key="3"/>
<evidence type="ECO:0000255" key="4">
    <source>
        <dbReference type="PROSITE-ProRule" id="PRU00098"/>
    </source>
</evidence>
<evidence type="ECO:0000255" key="5">
    <source>
        <dbReference type="PROSITE-ProRule" id="PRU00260"/>
    </source>
</evidence>
<evidence type="ECO:0000255" key="6">
    <source>
        <dbReference type="PROSITE-ProRule" id="PRU00446"/>
    </source>
</evidence>
<evidence type="ECO:0000256" key="7">
    <source>
        <dbReference type="SAM" id="MobiDB-lite"/>
    </source>
</evidence>
<evidence type="ECO:0000269" key="8">
    <source>
    </source>
</evidence>
<evidence type="ECO:0000269" key="9">
    <source>
    </source>
</evidence>
<evidence type="ECO:0000269" key="10">
    <source>
    </source>
</evidence>
<evidence type="ECO:0000303" key="11">
    <source>
    </source>
</evidence>
<evidence type="ECO:0000305" key="12"/>
<evidence type="ECO:0000312" key="13">
    <source>
        <dbReference type="MGI" id="MGI:1929461"/>
    </source>
</evidence>
<evidence type="ECO:0007744" key="14">
    <source>
        <dbReference type="PDB" id="2JXA"/>
    </source>
</evidence>
<evidence type="ECO:0007744" key="15">
    <source>
    </source>
</evidence>
<evidence type="ECO:0007744" key="16">
    <source>
    </source>
</evidence>
<evidence type="ECO:0007829" key="17">
    <source>
        <dbReference type="PDB" id="2JX9"/>
    </source>
</evidence>
<gene>
    <name evidence="13" type="primary">Adgrl1</name>
    <name evidence="13" type="synonym">Kiaa0821</name>
    <name evidence="13" type="synonym">Lec2</name>
    <name evidence="13" type="synonym">Lphn1</name>
</gene>
<name>AGRL1_MOUSE</name>
<accession>Q80TR1</accession>
<accession>Q3UH90</accession>
<accession>Q7TNE5</accession>
<accession>Q80T49</accession>
<protein>
    <recommendedName>
        <fullName evidence="13">Adhesion G protein-coupled receptor L1</fullName>
    </recommendedName>
    <alternativeName>
        <fullName evidence="2">Calcium-independent alpha-latrotoxin receptor 1</fullName>
        <shortName evidence="2">CIRL-1</shortName>
    </alternativeName>
    <alternativeName>
        <fullName evidence="13">Latrophilin-1</fullName>
    </alternativeName>
    <alternativeName>
        <fullName evidence="13">Lectomedin-2</fullName>
    </alternativeName>
</protein>
<organism>
    <name type="scientific">Mus musculus</name>
    <name type="common">Mouse</name>
    <dbReference type="NCBI Taxonomy" id="10090"/>
    <lineage>
        <taxon>Eukaryota</taxon>
        <taxon>Metazoa</taxon>
        <taxon>Chordata</taxon>
        <taxon>Craniata</taxon>
        <taxon>Vertebrata</taxon>
        <taxon>Euteleostomi</taxon>
        <taxon>Mammalia</taxon>
        <taxon>Eutheria</taxon>
        <taxon>Euarchontoglires</taxon>
        <taxon>Glires</taxon>
        <taxon>Rodentia</taxon>
        <taxon>Myomorpha</taxon>
        <taxon>Muroidea</taxon>
        <taxon>Muridae</taxon>
        <taxon>Murinae</taxon>
        <taxon>Mus</taxon>
        <taxon>Mus</taxon>
    </lineage>
</organism>